<gene>
    <name type="ordered locus">ABBFA_001173</name>
</gene>
<protein>
    <recommendedName>
        <fullName evidence="1">UPF0246 protein ABBFA_001173</fullName>
    </recommendedName>
</protein>
<accession>B7GZV3</accession>
<organism>
    <name type="scientific">Acinetobacter baumannii (strain AB307-0294)</name>
    <dbReference type="NCBI Taxonomy" id="557600"/>
    <lineage>
        <taxon>Bacteria</taxon>
        <taxon>Pseudomonadati</taxon>
        <taxon>Pseudomonadota</taxon>
        <taxon>Gammaproteobacteria</taxon>
        <taxon>Moraxellales</taxon>
        <taxon>Moraxellaceae</taxon>
        <taxon>Acinetobacter</taxon>
        <taxon>Acinetobacter calcoaceticus/baumannii complex</taxon>
    </lineage>
</organism>
<comment type="similarity">
    <text evidence="1">Belongs to the UPF0246 family.</text>
</comment>
<feature type="chain" id="PRO_1000131093" description="UPF0246 protein ABBFA_001173">
    <location>
        <begin position="1"/>
        <end position="259"/>
    </location>
</feature>
<reference key="1">
    <citation type="journal article" date="2008" name="J. Bacteriol.">
        <title>Comparative genome sequence analysis of multidrug-resistant Acinetobacter baumannii.</title>
        <authorList>
            <person name="Adams M.D."/>
            <person name="Goglin K."/>
            <person name="Molyneaux N."/>
            <person name="Hujer K.M."/>
            <person name="Lavender H."/>
            <person name="Jamison J.J."/>
            <person name="MacDonald I.J."/>
            <person name="Martin K.M."/>
            <person name="Russo T."/>
            <person name="Campagnari A.A."/>
            <person name="Hujer A.M."/>
            <person name="Bonomo R.A."/>
            <person name="Gill S.R."/>
        </authorList>
    </citation>
    <scope>NUCLEOTIDE SEQUENCE [LARGE SCALE GENOMIC DNA]</scope>
    <source>
        <strain>AB307-0294</strain>
    </source>
</reference>
<dbReference type="EMBL" id="CP001172">
    <property type="protein sequence ID" value="ACJ56765.1"/>
    <property type="molecule type" value="Genomic_DNA"/>
</dbReference>
<dbReference type="SMR" id="B7GZV3"/>
<dbReference type="HOGENOM" id="CLU_061989_0_0_6"/>
<dbReference type="Proteomes" id="UP000006924">
    <property type="component" value="Chromosome"/>
</dbReference>
<dbReference type="GO" id="GO:0005829">
    <property type="term" value="C:cytosol"/>
    <property type="evidence" value="ECO:0007669"/>
    <property type="project" value="TreeGrafter"/>
</dbReference>
<dbReference type="GO" id="GO:0033194">
    <property type="term" value="P:response to hydroperoxide"/>
    <property type="evidence" value="ECO:0007669"/>
    <property type="project" value="TreeGrafter"/>
</dbReference>
<dbReference type="HAMAP" id="MF_00652">
    <property type="entry name" value="UPF0246"/>
    <property type="match status" value="1"/>
</dbReference>
<dbReference type="InterPro" id="IPR005583">
    <property type="entry name" value="YaaA"/>
</dbReference>
<dbReference type="NCBIfam" id="NF002541">
    <property type="entry name" value="PRK02101.1-1"/>
    <property type="match status" value="1"/>
</dbReference>
<dbReference type="NCBIfam" id="NF002542">
    <property type="entry name" value="PRK02101.1-3"/>
    <property type="match status" value="1"/>
</dbReference>
<dbReference type="PANTHER" id="PTHR30283:SF4">
    <property type="entry name" value="PEROXIDE STRESS RESISTANCE PROTEIN YAAA"/>
    <property type="match status" value="1"/>
</dbReference>
<dbReference type="PANTHER" id="PTHR30283">
    <property type="entry name" value="PEROXIDE STRESS RESPONSE PROTEIN YAAA"/>
    <property type="match status" value="1"/>
</dbReference>
<dbReference type="Pfam" id="PF03883">
    <property type="entry name" value="H2O2_YaaD"/>
    <property type="match status" value="1"/>
</dbReference>
<sequence length="259" mass="29836">MLALISPAKTLDYETALPTDEFTQPRLLEHSAQLIDVCRKLSASEIASLMSVSEKIATLNADRFRDWKPEFDFSNARQAIYAFKGDVYTGLDAYHLKDKDIDFAQQHLRMLSGLYGLLRPLDLMMPYRLEMGTKLKNTRGHNLYEFWDDIITNQINEDLAAIKSELLVNLASDEYYKSVNEKKIKAEIVKPVFLDQKNGKYKVISFYAKKARGLMARFIIENQLNKAEDLKAFNTEGYYFDADNSSAKELVFKRDEQQA</sequence>
<proteinExistence type="inferred from homology"/>
<evidence type="ECO:0000255" key="1">
    <source>
        <dbReference type="HAMAP-Rule" id="MF_00652"/>
    </source>
</evidence>
<name>Y1173_ACIB3</name>